<dbReference type="EC" id="2.1.2.11" evidence="1"/>
<dbReference type="EMBL" id="CP001616">
    <property type="protein sequence ID" value="ACQ93899.1"/>
    <property type="molecule type" value="Genomic_DNA"/>
</dbReference>
<dbReference type="RefSeq" id="WP_015879367.1">
    <property type="nucleotide sequence ID" value="NC_012691.1"/>
</dbReference>
<dbReference type="SMR" id="C4L929"/>
<dbReference type="STRING" id="595494.Tola_2302"/>
<dbReference type="KEGG" id="tau:Tola_2302"/>
<dbReference type="eggNOG" id="COG0413">
    <property type="taxonomic scope" value="Bacteria"/>
</dbReference>
<dbReference type="HOGENOM" id="CLU_036645_1_0_6"/>
<dbReference type="OrthoDB" id="9781789at2"/>
<dbReference type="UniPathway" id="UPA00028">
    <property type="reaction ID" value="UER00003"/>
</dbReference>
<dbReference type="Proteomes" id="UP000009073">
    <property type="component" value="Chromosome"/>
</dbReference>
<dbReference type="GO" id="GO:0005737">
    <property type="term" value="C:cytoplasm"/>
    <property type="evidence" value="ECO:0007669"/>
    <property type="project" value="UniProtKB-SubCell"/>
</dbReference>
<dbReference type="GO" id="GO:0003864">
    <property type="term" value="F:3-methyl-2-oxobutanoate hydroxymethyltransferase activity"/>
    <property type="evidence" value="ECO:0007669"/>
    <property type="project" value="UniProtKB-UniRule"/>
</dbReference>
<dbReference type="GO" id="GO:0000287">
    <property type="term" value="F:magnesium ion binding"/>
    <property type="evidence" value="ECO:0007669"/>
    <property type="project" value="TreeGrafter"/>
</dbReference>
<dbReference type="GO" id="GO:0015940">
    <property type="term" value="P:pantothenate biosynthetic process"/>
    <property type="evidence" value="ECO:0007669"/>
    <property type="project" value="UniProtKB-UniRule"/>
</dbReference>
<dbReference type="CDD" id="cd06557">
    <property type="entry name" value="KPHMT-like"/>
    <property type="match status" value="1"/>
</dbReference>
<dbReference type="FunFam" id="3.20.20.60:FF:000003">
    <property type="entry name" value="3-methyl-2-oxobutanoate hydroxymethyltransferase"/>
    <property type="match status" value="1"/>
</dbReference>
<dbReference type="Gene3D" id="3.20.20.60">
    <property type="entry name" value="Phosphoenolpyruvate-binding domains"/>
    <property type="match status" value="1"/>
</dbReference>
<dbReference type="HAMAP" id="MF_00156">
    <property type="entry name" value="PanB"/>
    <property type="match status" value="1"/>
</dbReference>
<dbReference type="InterPro" id="IPR003700">
    <property type="entry name" value="Pantoate_hydroxy_MeTrfase"/>
</dbReference>
<dbReference type="InterPro" id="IPR015813">
    <property type="entry name" value="Pyrv/PenolPyrv_kinase-like_dom"/>
</dbReference>
<dbReference type="InterPro" id="IPR040442">
    <property type="entry name" value="Pyrv_kinase-like_dom_sf"/>
</dbReference>
<dbReference type="NCBIfam" id="TIGR00222">
    <property type="entry name" value="panB"/>
    <property type="match status" value="1"/>
</dbReference>
<dbReference type="NCBIfam" id="NF001452">
    <property type="entry name" value="PRK00311.1"/>
    <property type="match status" value="1"/>
</dbReference>
<dbReference type="PANTHER" id="PTHR20881">
    <property type="entry name" value="3-METHYL-2-OXOBUTANOATE HYDROXYMETHYLTRANSFERASE"/>
    <property type="match status" value="1"/>
</dbReference>
<dbReference type="PANTHER" id="PTHR20881:SF0">
    <property type="entry name" value="3-METHYL-2-OXOBUTANOATE HYDROXYMETHYLTRANSFERASE"/>
    <property type="match status" value="1"/>
</dbReference>
<dbReference type="Pfam" id="PF02548">
    <property type="entry name" value="Pantoate_transf"/>
    <property type="match status" value="1"/>
</dbReference>
<dbReference type="PIRSF" id="PIRSF000388">
    <property type="entry name" value="Pantoate_hydroxy_MeTrfase"/>
    <property type="match status" value="1"/>
</dbReference>
<dbReference type="SUPFAM" id="SSF51621">
    <property type="entry name" value="Phosphoenolpyruvate/pyruvate domain"/>
    <property type="match status" value="1"/>
</dbReference>
<keyword id="KW-0963">Cytoplasm</keyword>
<keyword id="KW-0460">Magnesium</keyword>
<keyword id="KW-0479">Metal-binding</keyword>
<keyword id="KW-0566">Pantothenate biosynthesis</keyword>
<keyword id="KW-1185">Reference proteome</keyword>
<keyword id="KW-0808">Transferase</keyword>
<reference key="1">
    <citation type="submission" date="2009-05" db="EMBL/GenBank/DDBJ databases">
        <title>Complete sequence of Tolumonas auensis DSM 9187.</title>
        <authorList>
            <consortium name="US DOE Joint Genome Institute"/>
            <person name="Lucas S."/>
            <person name="Copeland A."/>
            <person name="Lapidus A."/>
            <person name="Glavina del Rio T."/>
            <person name="Tice H."/>
            <person name="Bruce D."/>
            <person name="Goodwin L."/>
            <person name="Pitluck S."/>
            <person name="Chertkov O."/>
            <person name="Brettin T."/>
            <person name="Detter J.C."/>
            <person name="Han C."/>
            <person name="Larimer F."/>
            <person name="Land M."/>
            <person name="Hauser L."/>
            <person name="Kyrpides N."/>
            <person name="Mikhailova N."/>
            <person name="Spring S."/>
            <person name="Beller H."/>
        </authorList>
    </citation>
    <scope>NUCLEOTIDE SEQUENCE [LARGE SCALE GENOMIC DNA]</scope>
    <source>
        <strain>DSM 9187 / NBRC 110442 / TA 4</strain>
    </source>
</reference>
<feature type="chain" id="PRO_1000203483" description="3-methyl-2-oxobutanoate hydroxymethyltransferase">
    <location>
        <begin position="1"/>
        <end position="264"/>
    </location>
</feature>
<feature type="active site" description="Proton acceptor" evidence="1">
    <location>
        <position position="181"/>
    </location>
</feature>
<feature type="binding site" evidence="1">
    <location>
        <begin position="45"/>
        <end position="46"/>
    </location>
    <ligand>
        <name>3-methyl-2-oxobutanoate</name>
        <dbReference type="ChEBI" id="CHEBI:11851"/>
    </ligand>
</feature>
<feature type="binding site" evidence="1">
    <location>
        <position position="45"/>
    </location>
    <ligand>
        <name>Mg(2+)</name>
        <dbReference type="ChEBI" id="CHEBI:18420"/>
    </ligand>
</feature>
<feature type="binding site" evidence="1">
    <location>
        <position position="84"/>
    </location>
    <ligand>
        <name>3-methyl-2-oxobutanoate</name>
        <dbReference type="ChEBI" id="CHEBI:11851"/>
    </ligand>
</feature>
<feature type="binding site" evidence="1">
    <location>
        <position position="84"/>
    </location>
    <ligand>
        <name>Mg(2+)</name>
        <dbReference type="ChEBI" id="CHEBI:18420"/>
    </ligand>
</feature>
<feature type="binding site" evidence="1">
    <location>
        <position position="112"/>
    </location>
    <ligand>
        <name>3-methyl-2-oxobutanoate</name>
        <dbReference type="ChEBI" id="CHEBI:11851"/>
    </ligand>
</feature>
<feature type="binding site" evidence="1">
    <location>
        <position position="114"/>
    </location>
    <ligand>
        <name>Mg(2+)</name>
        <dbReference type="ChEBI" id="CHEBI:18420"/>
    </ligand>
</feature>
<accession>C4L929</accession>
<organism>
    <name type="scientific">Tolumonas auensis (strain DSM 9187 / NBRC 110442 / TA 4)</name>
    <dbReference type="NCBI Taxonomy" id="595494"/>
    <lineage>
        <taxon>Bacteria</taxon>
        <taxon>Pseudomonadati</taxon>
        <taxon>Pseudomonadota</taxon>
        <taxon>Gammaproteobacteria</taxon>
        <taxon>Aeromonadales</taxon>
        <taxon>Aeromonadaceae</taxon>
        <taxon>Tolumonas</taxon>
    </lineage>
</organism>
<sequence length="264" mass="28503">MSKISLTQVQKMKQSGEKIAMITAYDATFARLFDDEGVHSILVGDSLGMVVQGHNDTLPVTVNDMVYHTANVARGVQNALLIADLPFMSYSDVHSACINAGRLMAAGAKMVKIEGGDWLCDTVKQLNRNGIPVCAHLGLTPQSVHLFGGFRIQGRDAQRAEEIYHHALALQTAGVQMVVLECVPEQLAERITKALRIPVIGIGAGAQTDGQVLVMQDALGVTTGYIPKFSKNFLAETGDVRKAIQLYVEQVANGQFPAAEHTFN</sequence>
<proteinExistence type="inferred from homology"/>
<comment type="function">
    <text evidence="1">Catalyzes the reversible reaction in which hydroxymethyl group from 5,10-methylenetetrahydrofolate is transferred onto alpha-ketoisovalerate to form ketopantoate.</text>
</comment>
<comment type="catalytic activity">
    <reaction evidence="1">
        <text>3-methyl-2-oxobutanoate + (6R)-5,10-methylene-5,6,7,8-tetrahydrofolate + H2O = 2-dehydropantoate + (6S)-5,6,7,8-tetrahydrofolate</text>
        <dbReference type="Rhea" id="RHEA:11824"/>
        <dbReference type="ChEBI" id="CHEBI:11561"/>
        <dbReference type="ChEBI" id="CHEBI:11851"/>
        <dbReference type="ChEBI" id="CHEBI:15377"/>
        <dbReference type="ChEBI" id="CHEBI:15636"/>
        <dbReference type="ChEBI" id="CHEBI:57453"/>
        <dbReference type="EC" id="2.1.2.11"/>
    </reaction>
</comment>
<comment type="cofactor">
    <cofactor evidence="1">
        <name>Mg(2+)</name>
        <dbReference type="ChEBI" id="CHEBI:18420"/>
    </cofactor>
    <text evidence="1">Binds 1 Mg(2+) ion per subunit.</text>
</comment>
<comment type="pathway">
    <text evidence="1">Cofactor biosynthesis; (R)-pantothenate biosynthesis; (R)-pantoate from 3-methyl-2-oxobutanoate: step 1/2.</text>
</comment>
<comment type="subunit">
    <text evidence="1">Homodecamer; pentamer of dimers.</text>
</comment>
<comment type="subcellular location">
    <subcellularLocation>
        <location evidence="1">Cytoplasm</location>
    </subcellularLocation>
</comment>
<comment type="similarity">
    <text evidence="1">Belongs to the PanB family.</text>
</comment>
<evidence type="ECO:0000255" key="1">
    <source>
        <dbReference type="HAMAP-Rule" id="MF_00156"/>
    </source>
</evidence>
<name>PANB_TOLAT</name>
<gene>
    <name evidence="1" type="primary">panB</name>
    <name type="ordered locus">Tola_2302</name>
</gene>
<protein>
    <recommendedName>
        <fullName evidence="1">3-methyl-2-oxobutanoate hydroxymethyltransferase</fullName>
        <ecNumber evidence="1">2.1.2.11</ecNumber>
    </recommendedName>
    <alternativeName>
        <fullName evidence="1">Ketopantoate hydroxymethyltransferase</fullName>
        <shortName evidence="1">KPHMT</shortName>
    </alternativeName>
</protein>